<protein>
    <recommendedName>
        <fullName evidence="1">Large ribosomal subunit protein uL4</fullName>
    </recommendedName>
    <alternativeName>
        <fullName evidence="3">50S ribosomal protein L4</fullName>
    </alternativeName>
</protein>
<name>RL4_MYCPA</name>
<organism>
    <name type="scientific">Mycolicibacterium paratuberculosis (strain ATCC BAA-968 / K-10)</name>
    <name type="common">Mycobacterium paratuberculosis</name>
    <dbReference type="NCBI Taxonomy" id="262316"/>
    <lineage>
        <taxon>Bacteria</taxon>
        <taxon>Bacillati</taxon>
        <taxon>Actinomycetota</taxon>
        <taxon>Actinomycetes</taxon>
        <taxon>Mycobacteriales</taxon>
        <taxon>Mycobacteriaceae</taxon>
        <taxon>Mycobacterium</taxon>
        <taxon>Mycobacterium avium complex (MAC)</taxon>
    </lineage>
</organism>
<gene>
    <name evidence="1" type="primary">rplD</name>
    <name type="ordered locus">MAP_4162</name>
</gene>
<comment type="function">
    <text evidence="1">One of the primary rRNA binding proteins, this protein initially binds near the 5'-end of the 23S rRNA. It is important during the early stages of 50S assembly. It makes multiple contacts with different domains of the 23S rRNA in the assembled 50S subunit and ribosome.</text>
</comment>
<comment type="function">
    <text evidence="1">Forms part of the polypeptide exit tunnel.</text>
</comment>
<comment type="subunit">
    <text evidence="1">Part of the 50S ribosomal subunit.</text>
</comment>
<comment type="similarity">
    <text evidence="1">Belongs to the universal ribosomal protein uL4 family.</text>
</comment>
<reference key="1">
    <citation type="journal article" date="2005" name="Proc. Natl. Acad. Sci. U.S.A.">
        <title>The complete genome sequence of Mycobacterium avium subspecies paratuberculosis.</title>
        <authorList>
            <person name="Li L."/>
            <person name="Bannantine J.P."/>
            <person name="Zhang Q."/>
            <person name="Amonsin A."/>
            <person name="May B.J."/>
            <person name="Alt D."/>
            <person name="Banerji N."/>
            <person name="Kanjilal S."/>
            <person name="Kapur V."/>
        </authorList>
    </citation>
    <scope>NUCLEOTIDE SEQUENCE [LARGE SCALE GENOMIC DNA]</scope>
    <source>
        <strain>ATCC BAA-968 / K-10</strain>
    </source>
</reference>
<sequence>MALKLDVKAPGGKVEGSIELPAELFDAPANIALMHQVVTAQRAAARQGTHSTKTRGDVSGGGRKPYRQKGTGRARQGSTRAPQFTGGGVVHGPKPRDYSQRTPKKMIAAALRGALSDRARNGRIHAITELVSGQTPSTKSAKAFLGALTERKQVLVVIGRSDEAGAKSVRNLPGVHILAPDQLNTYDVLRADDVVFSVEALRAYIAANTGTPEEVSA</sequence>
<proteinExistence type="inferred from homology"/>
<keyword id="KW-1185">Reference proteome</keyword>
<keyword id="KW-0687">Ribonucleoprotein</keyword>
<keyword id="KW-0689">Ribosomal protein</keyword>
<keyword id="KW-0694">RNA-binding</keyword>
<keyword id="KW-0699">rRNA-binding</keyword>
<accession>P61066</accession>
<evidence type="ECO:0000255" key="1">
    <source>
        <dbReference type="HAMAP-Rule" id="MF_01328"/>
    </source>
</evidence>
<evidence type="ECO:0000256" key="2">
    <source>
        <dbReference type="SAM" id="MobiDB-lite"/>
    </source>
</evidence>
<evidence type="ECO:0000305" key="3"/>
<dbReference type="EMBL" id="AE016958">
    <property type="protein sequence ID" value="AAS06712.1"/>
    <property type="molecule type" value="Genomic_DNA"/>
</dbReference>
<dbReference type="RefSeq" id="WP_003873517.1">
    <property type="nucleotide sequence ID" value="NZ_CP106873.1"/>
</dbReference>
<dbReference type="SMR" id="P61066"/>
<dbReference type="STRING" id="262316.MAP_4162"/>
<dbReference type="KEGG" id="mpa:MAP_4162"/>
<dbReference type="eggNOG" id="COG0088">
    <property type="taxonomic scope" value="Bacteria"/>
</dbReference>
<dbReference type="HOGENOM" id="CLU_041575_5_0_11"/>
<dbReference type="Proteomes" id="UP000000580">
    <property type="component" value="Chromosome"/>
</dbReference>
<dbReference type="GO" id="GO:1990904">
    <property type="term" value="C:ribonucleoprotein complex"/>
    <property type="evidence" value="ECO:0007669"/>
    <property type="project" value="UniProtKB-KW"/>
</dbReference>
<dbReference type="GO" id="GO:0005840">
    <property type="term" value="C:ribosome"/>
    <property type="evidence" value="ECO:0007669"/>
    <property type="project" value="UniProtKB-KW"/>
</dbReference>
<dbReference type="GO" id="GO:0019843">
    <property type="term" value="F:rRNA binding"/>
    <property type="evidence" value="ECO:0007669"/>
    <property type="project" value="UniProtKB-UniRule"/>
</dbReference>
<dbReference type="GO" id="GO:0003735">
    <property type="term" value="F:structural constituent of ribosome"/>
    <property type="evidence" value="ECO:0007669"/>
    <property type="project" value="InterPro"/>
</dbReference>
<dbReference type="GO" id="GO:0006412">
    <property type="term" value="P:translation"/>
    <property type="evidence" value="ECO:0007669"/>
    <property type="project" value="UniProtKB-UniRule"/>
</dbReference>
<dbReference type="FunFam" id="3.40.1370.10:FF:000004">
    <property type="entry name" value="50S ribosomal protein L4"/>
    <property type="match status" value="1"/>
</dbReference>
<dbReference type="Gene3D" id="3.40.1370.10">
    <property type="match status" value="1"/>
</dbReference>
<dbReference type="HAMAP" id="MF_01328_B">
    <property type="entry name" value="Ribosomal_uL4_B"/>
    <property type="match status" value="1"/>
</dbReference>
<dbReference type="InterPro" id="IPR002136">
    <property type="entry name" value="Ribosomal_uL4"/>
</dbReference>
<dbReference type="InterPro" id="IPR013005">
    <property type="entry name" value="Ribosomal_uL4-like"/>
</dbReference>
<dbReference type="InterPro" id="IPR023574">
    <property type="entry name" value="Ribosomal_uL4_dom_sf"/>
</dbReference>
<dbReference type="NCBIfam" id="TIGR03953">
    <property type="entry name" value="rplD_bact"/>
    <property type="match status" value="1"/>
</dbReference>
<dbReference type="PANTHER" id="PTHR10746">
    <property type="entry name" value="50S RIBOSOMAL PROTEIN L4"/>
    <property type="match status" value="1"/>
</dbReference>
<dbReference type="PANTHER" id="PTHR10746:SF6">
    <property type="entry name" value="LARGE RIBOSOMAL SUBUNIT PROTEIN UL4M"/>
    <property type="match status" value="1"/>
</dbReference>
<dbReference type="Pfam" id="PF00573">
    <property type="entry name" value="Ribosomal_L4"/>
    <property type="match status" value="1"/>
</dbReference>
<dbReference type="SUPFAM" id="SSF52166">
    <property type="entry name" value="Ribosomal protein L4"/>
    <property type="match status" value="1"/>
</dbReference>
<feature type="chain" id="PRO_0000129242" description="Large ribosomal subunit protein uL4">
    <location>
        <begin position="1"/>
        <end position="217"/>
    </location>
</feature>
<feature type="region of interest" description="Disordered" evidence="2">
    <location>
        <begin position="42"/>
        <end position="100"/>
    </location>
</feature>